<gene>
    <name type="primary">hisH</name>
    <name type="ordered locus">AF_2265</name>
</gene>
<evidence type="ECO:0000250" key="1"/>
<feature type="chain" id="PRO_0000152454" description="Imidazole glycerol phosphate synthase subunit HisH">
    <location>
        <begin position="1"/>
        <end position="197"/>
    </location>
</feature>
<feature type="domain" description="Glutamine amidotransferase type-1">
    <location>
        <begin position="1"/>
        <end position="197"/>
    </location>
</feature>
<feature type="active site" description="Nucleophile" evidence="1">
    <location>
        <position position="74"/>
    </location>
</feature>
<feature type="active site" evidence="1">
    <location>
        <position position="176"/>
    </location>
</feature>
<feature type="active site" evidence="1">
    <location>
        <position position="178"/>
    </location>
</feature>
<dbReference type="EC" id="4.3.2.10"/>
<dbReference type="EC" id="3.5.1.2"/>
<dbReference type="EMBL" id="AE000782">
    <property type="protein sequence ID" value="AAB88985.1"/>
    <property type="molecule type" value="Genomic_DNA"/>
</dbReference>
<dbReference type="PIR" id="A69533">
    <property type="entry name" value="A69533"/>
</dbReference>
<dbReference type="RefSeq" id="WP_010879754.1">
    <property type="nucleotide sequence ID" value="NC_000917.1"/>
</dbReference>
<dbReference type="SMR" id="O28019"/>
<dbReference type="STRING" id="224325.AF_2265"/>
<dbReference type="PaxDb" id="224325-AF_2265"/>
<dbReference type="EnsemblBacteria" id="AAB88985">
    <property type="protein sequence ID" value="AAB88985"/>
    <property type="gene ID" value="AF_2265"/>
</dbReference>
<dbReference type="GeneID" id="24796030"/>
<dbReference type="KEGG" id="afu:AF_2265"/>
<dbReference type="eggNOG" id="arCOG00089">
    <property type="taxonomic scope" value="Archaea"/>
</dbReference>
<dbReference type="HOGENOM" id="CLU_071837_2_2_2"/>
<dbReference type="OrthoDB" id="33401at2157"/>
<dbReference type="PhylomeDB" id="O28019"/>
<dbReference type="UniPathway" id="UPA00031">
    <property type="reaction ID" value="UER00010"/>
</dbReference>
<dbReference type="Proteomes" id="UP000002199">
    <property type="component" value="Chromosome"/>
</dbReference>
<dbReference type="GO" id="GO:0005737">
    <property type="term" value="C:cytoplasm"/>
    <property type="evidence" value="ECO:0007669"/>
    <property type="project" value="UniProtKB-SubCell"/>
</dbReference>
<dbReference type="GO" id="GO:0004359">
    <property type="term" value="F:glutaminase activity"/>
    <property type="evidence" value="ECO:0007669"/>
    <property type="project" value="UniProtKB-EC"/>
</dbReference>
<dbReference type="GO" id="GO:0000107">
    <property type="term" value="F:imidazoleglycerol-phosphate synthase activity"/>
    <property type="evidence" value="ECO:0007669"/>
    <property type="project" value="UniProtKB-UniRule"/>
</dbReference>
<dbReference type="GO" id="GO:0016829">
    <property type="term" value="F:lyase activity"/>
    <property type="evidence" value="ECO:0007669"/>
    <property type="project" value="UniProtKB-KW"/>
</dbReference>
<dbReference type="GO" id="GO:0000105">
    <property type="term" value="P:L-histidine biosynthetic process"/>
    <property type="evidence" value="ECO:0007669"/>
    <property type="project" value="UniProtKB-UniRule"/>
</dbReference>
<dbReference type="CDD" id="cd01748">
    <property type="entry name" value="GATase1_IGP_Synthase"/>
    <property type="match status" value="1"/>
</dbReference>
<dbReference type="Gene3D" id="3.40.50.880">
    <property type="match status" value="1"/>
</dbReference>
<dbReference type="HAMAP" id="MF_00278">
    <property type="entry name" value="HisH"/>
    <property type="match status" value="1"/>
</dbReference>
<dbReference type="InterPro" id="IPR029062">
    <property type="entry name" value="Class_I_gatase-like"/>
</dbReference>
<dbReference type="InterPro" id="IPR017926">
    <property type="entry name" value="GATASE"/>
</dbReference>
<dbReference type="InterPro" id="IPR010139">
    <property type="entry name" value="Imidazole-glycPsynth_HisH"/>
</dbReference>
<dbReference type="NCBIfam" id="TIGR01855">
    <property type="entry name" value="IMP_synth_hisH"/>
    <property type="match status" value="1"/>
</dbReference>
<dbReference type="PANTHER" id="PTHR42701">
    <property type="entry name" value="IMIDAZOLE GLYCEROL PHOSPHATE SYNTHASE SUBUNIT HISH"/>
    <property type="match status" value="1"/>
</dbReference>
<dbReference type="PANTHER" id="PTHR42701:SF1">
    <property type="entry name" value="IMIDAZOLE GLYCEROL PHOSPHATE SYNTHASE SUBUNIT HISH"/>
    <property type="match status" value="1"/>
</dbReference>
<dbReference type="Pfam" id="PF00117">
    <property type="entry name" value="GATase"/>
    <property type="match status" value="1"/>
</dbReference>
<dbReference type="PIRSF" id="PIRSF000495">
    <property type="entry name" value="Amidotransf_hisH"/>
    <property type="match status" value="1"/>
</dbReference>
<dbReference type="SUPFAM" id="SSF52317">
    <property type="entry name" value="Class I glutamine amidotransferase-like"/>
    <property type="match status" value="1"/>
</dbReference>
<dbReference type="PROSITE" id="PS51273">
    <property type="entry name" value="GATASE_TYPE_1"/>
    <property type="match status" value="1"/>
</dbReference>
<keyword id="KW-0028">Amino-acid biosynthesis</keyword>
<keyword id="KW-0963">Cytoplasm</keyword>
<keyword id="KW-0315">Glutamine amidotransferase</keyword>
<keyword id="KW-0368">Histidine biosynthesis</keyword>
<keyword id="KW-0378">Hydrolase</keyword>
<keyword id="KW-0456">Lyase</keyword>
<keyword id="KW-1185">Reference proteome</keyword>
<comment type="function">
    <text evidence="1">IGPS catalyzes the conversion of PRFAR and glutamine to IGP, AICAR and glutamate. The HisH subunit catalyzes the hydrolysis of glutamine to glutamate and ammonia as part of the synthesis of IGP and AICAR. The resulting ammonia molecule is channeled to the active site of HisF (By similarity).</text>
</comment>
<comment type="catalytic activity">
    <reaction>
        <text>5-[(5-phospho-1-deoxy-D-ribulos-1-ylimino)methylamino]-1-(5-phospho-beta-D-ribosyl)imidazole-4-carboxamide + L-glutamine = D-erythro-1-(imidazol-4-yl)glycerol 3-phosphate + 5-amino-1-(5-phospho-beta-D-ribosyl)imidazole-4-carboxamide + L-glutamate + H(+)</text>
        <dbReference type="Rhea" id="RHEA:24793"/>
        <dbReference type="ChEBI" id="CHEBI:15378"/>
        <dbReference type="ChEBI" id="CHEBI:29985"/>
        <dbReference type="ChEBI" id="CHEBI:58278"/>
        <dbReference type="ChEBI" id="CHEBI:58359"/>
        <dbReference type="ChEBI" id="CHEBI:58475"/>
        <dbReference type="ChEBI" id="CHEBI:58525"/>
        <dbReference type="EC" id="4.3.2.10"/>
    </reaction>
</comment>
<comment type="catalytic activity">
    <reaction>
        <text>L-glutamine + H2O = L-glutamate + NH4(+)</text>
        <dbReference type="Rhea" id="RHEA:15889"/>
        <dbReference type="ChEBI" id="CHEBI:15377"/>
        <dbReference type="ChEBI" id="CHEBI:28938"/>
        <dbReference type="ChEBI" id="CHEBI:29985"/>
        <dbReference type="ChEBI" id="CHEBI:58359"/>
        <dbReference type="EC" id="3.5.1.2"/>
    </reaction>
</comment>
<comment type="pathway">
    <text>Amino-acid biosynthesis; L-histidine biosynthesis; L-histidine from 5-phospho-alpha-D-ribose 1-diphosphate: step 5/9.</text>
</comment>
<comment type="subunit">
    <text evidence="1">Heterodimer of HisH and HisF.</text>
</comment>
<comment type="subcellular location">
    <subcellularLocation>
        <location evidence="1">Cytoplasm</location>
    </subcellularLocation>
</comment>
<accession>O28019</accession>
<organism>
    <name type="scientific">Archaeoglobus fulgidus (strain ATCC 49558 / DSM 4304 / JCM 9628 / NBRC 100126 / VC-16)</name>
    <dbReference type="NCBI Taxonomy" id="224325"/>
    <lineage>
        <taxon>Archaea</taxon>
        <taxon>Methanobacteriati</taxon>
        <taxon>Methanobacteriota</taxon>
        <taxon>Archaeoglobi</taxon>
        <taxon>Archaeoglobales</taxon>
        <taxon>Archaeoglobaceae</taxon>
        <taxon>Archaeoglobus</taxon>
    </lineage>
</organism>
<proteinExistence type="inferred from homology"/>
<name>HIS5_ARCFU</name>
<reference key="1">
    <citation type="journal article" date="1997" name="Nature">
        <title>The complete genome sequence of the hyperthermophilic, sulphate-reducing archaeon Archaeoglobus fulgidus.</title>
        <authorList>
            <person name="Klenk H.-P."/>
            <person name="Clayton R.A."/>
            <person name="Tomb J.-F."/>
            <person name="White O."/>
            <person name="Nelson K.E."/>
            <person name="Ketchum K.A."/>
            <person name="Dodson R.J."/>
            <person name="Gwinn M.L."/>
            <person name="Hickey E.K."/>
            <person name="Peterson J.D."/>
            <person name="Richardson D.L."/>
            <person name="Kerlavage A.R."/>
            <person name="Graham D.E."/>
            <person name="Kyrpides N.C."/>
            <person name="Fleischmann R.D."/>
            <person name="Quackenbush J."/>
            <person name="Lee N.H."/>
            <person name="Sutton G.G."/>
            <person name="Gill S.R."/>
            <person name="Kirkness E.F."/>
            <person name="Dougherty B.A."/>
            <person name="McKenney K."/>
            <person name="Adams M.D."/>
            <person name="Loftus B.J."/>
            <person name="Peterson S.N."/>
            <person name="Reich C.I."/>
            <person name="McNeil L.K."/>
            <person name="Badger J.H."/>
            <person name="Glodek A."/>
            <person name="Zhou L."/>
            <person name="Overbeek R."/>
            <person name="Gocayne J.D."/>
            <person name="Weidman J.F."/>
            <person name="McDonald L.A."/>
            <person name="Utterback T.R."/>
            <person name="Cotton M.D."/>
            <person name="Spriggs T."/>
            <person name="Artiach P."/>
            <person name="Kaine B.P."/>
            <person name="Sykes S.M."/>
            <person name="Sadow P.W."/>
            <person name="D'Andrea K.P."/>
            <person name="Bowman C."/>
            <person name="Fujii C."/>
            <person name="Garland S.A."/>
            <person name="Mason T.M."/>
            <person name="Olsen G.J."/>
            <person name="Fraser C.M."/>
            <person name="Smith H.O."/>
            <person name="Woese C.R."/>
            <person name="Venter J.C."/>
        </authorList>
    </citation>
    <scope>NUCLEOTIDE SEQUENCE [LARGE SCALE GENOMIC DNA]</scope>
    <source>
        <strain>ATCC 49558 / DSM 4304 / JCM 9628 / NBRC 100126 / VC-16</strain>
    </source>
</reference>
<sequence length="197" mass="21686">MIAIVNYGVGNLKSISKALETVGAKVSVTSDPEKIKCASGVVFPGVGAFKSAIEKLNLIRDVIDSLEVPILGICLGMQLFATESTEGGVYRGLDYIPGRVVRFPPSVGKVPHMGWNTLKITREAEILDGVESGEFVYFVHSYYMQTDDEFVISKTDYGIDFPSGVERENYIGFQFHPEKSGKVGLRILENFVNIVKR</sequence>
<protein>
    <recommendedName>
        <fullName>Imidazole glycerol phosphate synthase subunit HisH</fullName>
        <ecNumber>4.3.2.10</ecNumber>
    </recommendedName>
    <alternativeName>
        <fullName>IGP synthase glutaminase subunit</fullName>
        <ecNumber>3.5.1.2</ecNumber>
    </alternativeName>
    <alternativeName>
        <fullName>IGP synthase subunit HisH</fullName>
    </alternativeName>
    <alternativeName>
        <fullName>ImGP synthase subunit HisH</fullName>
        <shortName>IGPS subunit HisH</shortName>
    </alternativeName>
</protein>